<protein>
    <recommendedName>
        <fullName>Uncharacterized protein L585</fullName>
    </recommendedName>
</protein>
<evidence type="ECO:0000256" key="1">
    <source>
        <dbReference type="SAM" id="MobiDB-lite"/>
    </source>
</evidence>
<evidence type="ECO:0000269" key="2">
    <source>
    </source>
</evidence>
<organismHost>
    <name type="scientific">Acanthamoeba polyphaga</name>
    <name type="common">Amoeba</name>
    <dbReference type="NCBI Taxonomy" id="5757"/>
</organismHost>
<gene>
    <name type="ordered locus">MIMI_L585</name>
</gene>
<feature type="chain" id="PRO_0000071293" description="Uncharacterized protein L585">
    <location>
        <begin position="1"/>
        <end position="107"/>
    </location>
</feature>
<feature type="region of interest" description="Disordered" evidence="1">
    <location>
        <begin position="88"/>
        <end position="107"/>
    </location>
</feature>
<organism>
    <name type="scientific">Acanthamoeba polyphaga mimivirus</name>
    <name type="common">APMV</name>
    <dbReference type="NCBI Taxonomy" id="212035"/>
    <lineage>
        <taxon>Viruses</taxon>
        <taxon>Varidnaviria</taxon>
        <taxon>Bamfordvirae</taxon>
        <taxon>Nucleocytoviricota</taxon>
        <taxon>Megaviricetes</taxon>
        <taxon>Imitervirales</taxon>
        <taxon>Mimiviridae</taxon>
        <taxon>Megamimivirinae</taxon>
        <taxon>Mimivirus</taxon>
        <taxon>Mimivirus bradfordmassiliense</taxon>
    </lineage>
</organism>
<keyword id="KW-1185">Reference proteome</keyword>
<keyword id="KW-0946">Virion</keyword>
<reference key="1">
    <citation type="journal article" date="2004" name="Science">
        <title>The 1.2-megabase genome sequence of Mimivirus.</title>
        <authorList>
            <person name="Raoult D."/>
            <person name="Audic S."/>
            <person name="Robert C."/>
            <person name="Abergel C."/>
            <person name="Renesto P."/>
            <person name="Ogata H."/>
            <person name="La Scola B."/>
            <person name="Susan M."/>
            <person name="Claverie J.-M."/>
        </authorList>
    </citation>
    <scope>NUCLEOTIDE SEQUENCE [LARGE SCALE GENOMIC DNA]</scope>
    <source>
        <strain>Rowbotham-Bradford</strain>
    </source>
</reference>
<reference key="2">
    <citation type="journal article" date="2006" name="J. Virol.">
        <title>Mimivirus giant particles incorporate a large fraction of anonymous and unique gene products.</title>
        <authorList>
            <person name="Renesto P."/>
            <person name="Abergel C."/>
            <person name="Decloquement P."/>
            <person name="Moinier D."/>
            <person name="Azza S."/>
            <person name="Ogata H."/>
            <person name="Fourquet P."/>
            <person name="Gorvel J.-P."/>
            <person name="Claverie J.-M."/>
            <person name="Raoult D."/>
        </authorList>
    </citation>
    <scope>IDENTIFICATION BY MASS SPECTROMETRY [LARGE SCALE ANALYSIS]</scope>
    <scope>SUBCELLULAR LOCATION</scope>
</reference>
<accession>Q5UP53</accession>
<name>YL585_MIMIV</name>
<comment type="subcellular location">
    <subcellularLocation>
        <location evidence="2">Virion</location>
    </subcellularLocation>
</comment>
<sequence>MDQTVYSNIPRYTYDPYYTDNPYYGGWAYGTLDPYRRCGGYGGYGAFAIPPWRGLNSYEGFGKVYRPWAGRSLLVAPAIYRAGSGPVGSTPWGSGRQVNAARPIGGR</sequence>
<proteinExistence type="evidence at protein level"/>
<dbReference type="EMBL" id="AY653733">
    <property type="protein sequence ID" value="AAV50848.1"/>
    <property type="molecule type" value="Genomic_DNA"/>
</dbReference>
<dbReference type="KEGG" id="vg:9925221"/>
<dbReference type="Proteomes" id="UP000001134">
    <property type="component" value="Genome"/>
</dbReference>
<dbReference type="GO" id="GO:0044423">
    <property type="term" value="C:virion component"/>
    <property type="evidence" value="ECO:0007669"/>
    <property type="project" value="UniProtKB-KW"/>
</dbReference>